<keyword id="KW-0067">ATP-binding</keyword>
<keyword id="KW-0235">DNA replication</keyword>
<keyword id="KW-0547">Nucleotide-binding</keyword>
<keyword id="KW-1185">Reference proteome</keyword>
<reference key="1">
    <citation type="journal article" date="2000" name="Proc. Natl. Acad. Sci. U.S.A.">
        <title>Genome sequence of Halobacterium species NRC-1.</title>
        <authorList>
            <person name="Ng W.V."/>
            <person name="Kennedy S.P."/>
            <person name="Mahairas G.G."/>
            <person name="Berquist B."/>
            <person name="Pan M."/>
            <person name="Shukla H.D."/>
            <person name="Lasky S.R."/>
            <person name="Baliga N.S."/>
            <person name="Thorsson V."/>
            <person name="Sbrogna J."/>
            <person name="Swartzell S."/>
            <person name="Weir D."/>
            <person name="Hall J."/>
            <person name="Dahl T.A."/>
            <person name="Welti R."/>
            <person name="Goo Y.A."/>
            <person name="Leithauser B."/>
            <person name="Keller K."/>
            <person name="Cruz R."/>
            <person name="Danson M.J."/>
            <person name="Hough D.W."/>
            <person name="Maddocks D.G."/>
            <person name="Jablonski P.E."/>
            <person name="Krebs M.P."/>
            <person name="Angevine C.M."/>
            <person name="Dale H."/>
            <person name="Isenbarger T.A."/>
            <person name="Peck R.F."/>
            <person name="Pohlschroder M."/>
            <person name="Spudich J.L."/>
            <person name="Jung K.-H."/>
            <person name="Alam M."/>
            <person name="Freitas T."/>
            <person name="Hou S."/>
            <person name="Daniels C.J."/>
            <person name="Dennis P.P."/>
            <person name="Omer A.D."/>
            <person name="Ebhardt H."/>
            <person name="Lowe T.M."/>
            <person name="Liang P."/>
            <person name="Riley M."/>
            <person name="Hood L."/>
            <person name="DasSarma S."/>
        </authorList>
    </citation>
    <scope>NUCLEOTIDE SEQUENCE [LARGE SCALE GENOMIC DNA]</scope>
    <source>
        <strain>ATCC 700922 / JCM 11081 / NRC-1</strain>
    </source>
</reference>
<reference key="2">
    <citation type="journal article" date="2007" name="BMC Genet.">
        <title>Essential and non-essential DNA replication genes in the model halophilic Archaeon, Halobacterium sp. NRC-1.</title>
        <authorList>
            <person name="Berquist B.R."/>
            <person name="DasSarma P."/>
            <person name="DasSarma S."/>
        </authorList>
    </citation>
    <scope>DISRUPTION PHENOTYPE</scope>
    <source>
        <strain>ATCC 700922 / JCM 11081 / NRC-1</strain>
    </source>
</reference>
<organism>
    <name type="scientific">Halobacterium salinarum (strain ATCC 700922 / JCM 11081 / NRC-1)</name>
    <name type="common">Halobacterium halobium</name>
    <dbReference type="NCBI Taxonomy" id="64091"/>
    <lineage>
        <taxon>Archaea</taxon>
        <taxon>Methanobacteriati</taxon>
        <taxon>Methanobacteriota</taxon>
        <taxon>Stenosarchaea group</taxon>
        <taxon>Halobacteria</taxon>
        <taxon>Halobacteriales</taxon>
        <taxon>Halobacteriaceae</taxon>
        <taxon>Halobacterium</taxon>
        <taxon>Halobacterium salinarum NRC-34001</taxon>
    </lineage>
</organism>
<feature type="chain" id="PRO_0000150999" description="ORC1-type DNA replication protein 6">
    <location>
        <begin position="1"/>
        <end position="374"/>
    </location>
</feature>
<feature type="binding site" evidence="1">
    <location>
        <begin position="66"/>
        <end position="70"/>
    </location>
    <ligand>
        <name>ATP</name>
        <dbReference type="ChEBI" id="CHEBI:30616"/>
    </ligand>
</feature>
<feature type="binding site" evidence="1">
    <location>
        <position position="209"/>
    </location>
    <ligand>
        <name>ATP</name>
        <dbReference type="ChEBI" id="CHEBI:30616"/>
    </ligand>
</feature>
<feature type="binding site" evidence="1">
    <location>
        <position position="221"/>
    </location>
    <ligand>
        <name>ATP</name>
        <dbReference type="ChEBI" id="CHEBI:30616"/>
    </ligand>
</feature>
<protein>
    <recommendedName>
        <fullName evidence="1">ORC1-type DNA replication protein 6</fullName>
    </recommendedName>
</protein>
<proteinExistence type="inferred from homology"/>
<name>CDC66_HALSA</name>
<gene>
    <name type="primary">orc6</name>
    <name type="ordered locus">VNG_2271G</name>
</gene>
<evidence type="ECO:0000255" key="1">
    <source>
        <dbReference type="HAMAP-Rule" id="MF_01407"/>
    </source>
</evidence>
<evidence type="ECO:0000269" key="2">
    <source>
    </source>
</evidence>
<accession>Q9HN34</accession>
<sequence>MDEDPEEGLLGWGETVFRDEHVFEIDYVPEVFRHRESQLQTLQYALRPAVRGSRPLNVVARGPPGTGKTTAVQKLFGELSGQPGVQTVRVNCQVDSTRYAVFSRVFEEIFDYEPPSSGISFKKLFGQVAERIADDDEVLVVALDDVNYLFYEDEAGDTLYSLLRAHETQPGAKVGVVVVSSDLELDVIEALDGRVQSVFRPEEAYFSAYDRAEITDILRDRVEVGFREGAVAEPVLDAVGGRTDEAGDLRVGIDVLRRAGLHAESRASKTVEMEDVDAVYEDAKHVHLSRTLAALSDNERALVRTVAEQEGDRAGDVYDVFNDRTDLGYTRYTEIVNKLDELGVIDAAYEQRSGRGRSRTLRLTHDSEAVLERL</sequence>
<dbReference type="EMBL" id="AE004437">
    <property type="protein sequence ID" value="AAG20387.1"/>
    <property type="molecule type" value="Genomic_DNA"/>
</dbReference>
<dbReference type="PIR" id="G84377">
    <property type="entry name" value="G84377"/>
</dbReference>
<dbReference type="RefSeq" id="WP_010903688.1">
    <property type="nucleotide sequence ID" value="NC_002607.1"/>
</dbReference>
<dbReference type="SMR" id="Q9HN34"/>
<dbReference type="STRING" id="64091.VNG_2271G"/>
<dbReference type="PaxDb" id="64091-VNG_2271G"/>
<dbReference type="KEGG" id="hal:VNG_2271G"/>
<dbReference type="PATRIC" id="fig|64091.14.peg.1749"/>
<dbReference type="HOGENOM" id="CLU_025112_3_0_2"/>
<dbReference type="InParanoid" id="Q9HN34"/>
<dbReference type="OrthoDB" id="53276at2157"/>
<dbReference type="PhylomeDB" id="Q9HN34"/>
<dbReference type="Proteomes" id="UP000000554">
    <property type="component" value="Chromosome"/>
</dbReference>
<dbReference type="GO" id="GO:0005524">
    <property type="term" value="F:ATP binding"/>
    <property type="evidence" value="ECO:0007669"/>
    <property type="project" value="UniProtKB-UniRule"/>
</dbReference>
<dbReference type="GO" id="GO:0006260">
    <property type="term" value="P:DNA replication"/>
    <property type="evidence" value="ECO:0007669"/>
    <property type="project" value="UniProtKB-UniRule"/>
</dbReference>
<dbReference type="CDD" id="cd00009">
    <property type="entry name" value="AAA"/>
    <property type="match status" value="1"/>
</dbReference>
<dbReference type="Gene3D" id="1.10.8.60">
    <property type="match status" value="1"/>
</dbReference>
<dbReference type="Gene3D" id="3.40.50.300">
    <property type="entry name" value="P-loop containing nucleotide triphosphate hydrolases"/>
    <property type="match status" value="1"/>
</dbReference>
<dbReference type="Gene3D" id="1.10.10.10">
    <property type="entry name" value="Winged helix-like DNA-binding domain superfamily/Winged helix DNA-binding domain"/>
    <property type="match status" value="1"/>
</dbReference>
<dbReference type="HAMAP" id="MF_01407">
    <property type="entry name" value="ORC1_type_DNA_replic_protein"/>
    <property type="match status" value="1"/>
</dbReference>
<dbReference type="InterPro" id="IPR041664">
    <property type="entry name" value="AAA_16"/>
</dbReference>
<dbReference type="InterPro" id="IPR015163">
    <property type="entry name" value="Cdc6_C"/>
</dbReference>
<dbReference type="InterPro" id="IPR055237">
    <property type="entry name" value="Cdc6_lid"/>
</dbReference>
<dbReference type="InterPro" id="IPR050311">
    <property type="entry name" value="ORC1/CDC6"/>
</dbReference>
<dbReference type="InterPro" id="IPR014277">
    <property type="entry name" value="Orc1/Cdc6_arc"/>
</dbReference>
<dbReference type="InterPro" id="IPR027417">
    <property type="entry name" value="P-loop_NTPase"/>
</dbReference>
<dbReference type="InterPro" id="IPR036388">
    <property type="entry name" value="WH-like_DNA-bd_sf"/>
</dbReference>
<dbReference type="InterPro" id="IPR036390">
    <property type="entry name" value="WH_DNA-bd_sf"/>
</dbReference>
<dbReference type="NCBIfam" id="TIGR02928">
    <property type="entry name" value="orc1/cdc6 family replication initiation protein"/>
    <property type="match status" value="1"/>
</dbReference>
<dbReference type="NCBIfam" id="NF001624">
    <property type="entry name" value="PRK00411.1-2"/>
    <property type="match status" value="1"/>
</dbReference>
<dbReference type="NCBIfam" id="NF001626">
    <property type="entry name" value="PRK00411.1-5"/>
    <property type="match status" value="1"/>
</dbReference>
<dbReference type="PANTHER" id="PTHR10763:SF26">
    <property type="entry name" value="CELL DIVISION CONTROL PROTEIN 6 HOMOLOG"/>
    <property type="match status" value="1"/>
</dbReference>
<dbReference type="PANTHER" id="PTHR10763">
    <property type="entry name" value="CELL DIVISION CONTROL PROTEIN 6-RELATED"/>
    <property type="match status" value="1"/>
</dbReference>
<dbReference type="Pfam" id="PF13191">
    <property type="entry name" value="AAA_16"/>
    <property type="match status" value="1"/>
</dbReference>
<dbReference type="Pfam" id="PF22703">
    <property type="entry name" value="Cdc6_lid"/>
    <property type="match status" value="1"/>
</dbReference>
<dbReference type="SMART" id="SM01074">
    <property type="entry name" value="Cdc6_C"/>
    <property type="match status" value="1"/>
</dbReference>
<dbReference type="SUPFAM" id="SSF52540">
    <property type="entry name" value="P-loop containing nucleoside triphosphate hydrolases"/>
    <property type="match status" value="1"/>
</dbReference>
<dbReference type="SUPFAM" id="SSF46785">
    <property type="entry name" value="Winged helix' DNA-binding domain"/>
    <property type="match status" value="1"/>
</dbReference>
<comment type="function">
    <text evidence="1">Involved in regulation of DNA replication.</text>
</comment>
<comment type="disruption phenotype">
    <text evidence="2">Not essential for normal growth.</text>
</comment>
<comment type="similarity">
    <text evidence="1">Belongs to the CDC6/cdc18 family.</text>
</comment>